<gene>
    <name type="primary">Mtrf1l</name>
</gene>
<reference key="1">
    <citation type="journal article" date="2005" name="Science">
        <title>The transcriptional landscape of the mammalian genome.</title>
        <authorList>
            <person name="Carninci P."/>
            <person name="Kasukawa T."/>
            <person name="Katayama S."/>
            <person name="Gough J."/>
            <person name="Frith M.C."/>
            <person name="Maeda N."/>
            <person name="Oyama R."/>
            <person name="Ravasi T."/>
            <person name="Lenhard B."/>
            <person name="Wells C."/>
            <person name="Kodzius R."/>
            <person name="Shimokawa K."/>
            <person name="Bajic V.B."/>
            <person name="Brenner S.E."/>
            <person name="Batalov S."/>
            <person name="Forrest A.R."/>
            <person name="Zavolan M."/>
            <person name="Davis M.J."/>
            <person name="Wilming L.G."/>
            <person name="Aidinis V."/>
            <person name="Allen J.E."/>
            <person name="Ambesi-Impiombato A."/>
            <person name="Apweiler R."/>
            <person name="Aturaliya R.N."/>
            <person name="Bailey T.L."/>
            <person name="Bansal M."/>
            <person name="Baxter L."/>
            <person name="Beisel K.W."/>
            <person name="Bersano T."/>
            <person name="Bono H."/>
            <person name="Chalk A.M."/>
            <person name="Chiu K.P."/>
            <person name="Choudhary V."/>
            <person name="Christoffels A."/>
            <person name="Clutterbuck D.R."/>
            <person name="Crowe M.L."/>
            <person name="Dalla E."/>
            <person name="Dalrymple B.P."/>
            <person name="de Bono B."/>
            <person name="Della Gatta G."/>
            <person name="di Bernardo D."/>
            <person name="Down T."/>
            <person name="Engstrom P."/>
            <person name="Fagiolini M."/>
            <person name="Faulkner G."/>
            <person name="Fletcher C.F."/>
            <person name="Fukushima T."/>
            <person name="Furuno M."/>
            <person name="Futaki S."/>
            <person name="Gariboldi M."/>
            <person name="Georgii-Hemming P."/>
            <person name="Gingeras T.R."/>
            <person name="Gojobori T."/>
            <person name="Green R.E."/>
            <person name="Gustincich S."/>
            <person name="Harbers M."/>
            <person name="Hayashi Y."/>
            <person name="Hensch T.K."/>
            <person name="Hirokawa N."/>
            <person name="Hill D."/>
            <person name="Huminiecki L."/>
            <person name="Iacono M."/>
            <person name="Ikeo K."/>
            <person name="Iwama A."/>
            <person name="Ishikawa T."/>
            <person name="Jakt M."/>
            <person name="Kanapin A."/>
            <person name="Katoh M."/>
            <person name="Kawasawa Y."/>
            <person name="Kelso J."/>
            <person name="Kitamura H."/>
            <person name="Kitano H."/>
            <person name="Kollias G."/>
            <person name="Krishnan S.P."/>
            <person name="Kruger A."/>
            <person name="Kummerfeld S.K."/>
            <person name="Kurochkin I.V."/>
            <person name="Lareau L.F."/>
            <person name="Lazarevic D."/>
            <person name="Lipovich L."/>
            <person name="Liu J."/>
            <person name="Liuni S."/>
            <person name="McWilliam S."/>
            <person name="Madan Babu M."/>
            <person name="Madera M."/>
            <person name="Marchionni L."/>
            <person name="Matsuda H."/>
            <person name="Matsuzawa S."/>
            <person name="Miki H."/>
            <person name="Mignone F."/>
            <person name="Miyake S."/>
            <person name="Morris K."/>
            <person name="Mottagui-Tabar S."/>
            <person name="Mulder N."/>
            <person name="Nakano N."/>
            <person name="Nakauchi H."/>
            <person name="Ng P."/>
            <person name="Nilsson R."/>
            <person name="Nishiguchi S."/>
            <person name="Nishikawa S."/>
            <person name="Nori F."/>
            <person name="Ohara O."/>
            <person name="Okazaki Y."/>
            <person name="Orlando V."/>
            <person name="Pang K.C."/>
            <person name="Pavan W.J."/>
            <person name="Pavesi G."/>
            <person name="Pesole G."/>
            <person name="Petrovsky N."/>
            <person name="Piazza S."/>
            <person name="Reed J."/>
            <person name="Reid J.F."/>
            <person name="Ring B.Z."/>
            <person name="Ringwald M."/>
            <person name="Rost B."/>
            <person name="Ruan Y."/>
            <person name="Salzberg S.L."/>
            <person name="Sandelin A."/>
            <person name="Schneider C."/>
            <person name="Schoenbach C."/>
            <person name="Sekiguchi K."/>
            <person name="Semple C.A."/>
            <person name="Seno S."/>
            <person name="Sessa L."/>
            <person name="Sheng Y."/>
            <person name="Shibata Y."/>
            <person name="Shimada H."/>
            <person name="Shimada K."/>
            <person name="Silva D."/>
            <person name="Sinclair B."/>
            <person name="Sperling S."/>
            <person name="Stupka E."/>
            <person name="Sugiura K."/>
            <person name="Sultana R."/>
            <person name="Takenaka Y."/>
            <person name="Taki K."/>
            <person name="Tammoja K."/>
            <person name="Tan S.L."/>
            <person name="Tang S."/>
            <person name="Taylor M.S."/>
            <person name="Tegner J."/>
            <person name="Teichmann S.A."/>
            <person name="Ueda H.R."/>
            <person name="van Nimwegen E."/>
            <person name="Verardo R."/>
            <person name="Wei C.L."/>
            <person name="Yagi K."/>
            <person name="Yamanishi H."/>
            <person name="Zabarovsky E."/>
            <person name="Zhu S."/>
            <person name="Zimmer A."/>
            <person name="Hide W."/>
            <person name="Bult C."/>
            <person name="Grimmond S.M."/>
            <person name="Teasdale R.D."/>
            <person name="Liu E.T."/>
            <person name="Brusic V."/>
            <person name="Quackenbush J."/>
            <person name="Wahlestedt C."/>
            <person name="Mattick J.S."/>
            <person name="Hume D.A."/>
            <person name="Kai C."/>
            <person name="Sasaki D."/>
            <person name="Tomaru Y."/>
            <person name="Fukuda S."/>
            <person name="Kanamori-Katayama M."/>
            <person name="Suzuki M."/>
            <person name="Aoki J."/>
            <person name="Arakawa T."/>
            <person name="Iida J."/>
            <person name="Imamura K."/>
            <person name="Itoh M."/>
            <person name="Kato T."/>
            <person name="Kawaji H."/>
            <person name="Kawagashira N."/>
            <person name="Kawashima T."/>
            <person name="Kojima M."/>
            <person name="Kondo S."/>
            <person name="Konno H."/>
            <person name="Nakano K."/>
            <person name="Ninomiya N."/>
            <person name="Nishio T."/>
            <person name="Okada M."/>
            <person name="Plessy C."/>
            <person name="Shibata K."/>
            <person name="Shiraki T."/>
            <person name="Suzuki S."/>
            <person name="Tagami M."/>
            <person name="Waki K."/>
            <person name="Watahiki A."/>
            <person name="Okamura-Oho Y."/>
            <person name="Suzuki H."/>
            <person name="Kawai J."/>
            <person name="Hayashizaki Y."/>
        </authorList>
    </citation>
    <scope>NUCLEOTIDE SEQUENCE [LARGE SCALE MRNA]</scope>
    <source>
        <strain>C57BL/6J</strain>
        <tissue>Bone</tissue>
        <tissue>Cecum</tissue>
    </source>
</reference>
<keyword id="KW-0175">Coiled coil</keyword>
<keyword id="KW-0488">Methylation</keyword>
<keyword id="KW-0496">Mitochondrion</keyword>
<keyword id="KW-0648">Protein biosynthesis</keyword>
<keyword id="KW-1185">Reference proteome</keyword>
<keyword id="KW-0809">Transit peptide</keyword>
<sequence length="373" mass="42248">MRSGFLSGARRLWARRAFSRTPPPSEELLARGGPLRAFLERRVGSEAGGLDAGYPQLAAAARLLSEKERELRDTESLLHDENEDLKKLAESEIALCQKQITELKHQIISLLVPSEEMDGSDLILEVTAGVGGQEAMLFTSEMFDMYQQYAAFKRWHFETLEYFPSELGGLRHASASVGGPEAYRHMKFEGGVHRVQRVPKTEKQGRIHTSTMTVAILPQPTEIKLVINPKDLRIDTKRASGAGGQHVNTTDSAVRIVHLPTGIISECQQERSQLKNRELAMKKLRARLYSMHLEEETAKRYNARKIQVGTKGRSEKIRTYNFPQNRVTDHRINKSLHDLESFMQGDCLLDDMIQSLKDCSDYEALVEMISRRD</sequence>
<comment type="function">
    <text evidence="3">Mitochondrial peptide chain release factor that directs the termination of translation in response to the peptide chain termination codons UAA and UAG.</text>
</comment>
<comment type="subcellular location">
    <subcellularLocation>
        <location evidence="3">Mitochondrion</location>
    </subcellularLocation>
</comment>
<comment type="domain">
    <text evidence="2">The GGQ domain interacts with the peptidyltransferase center (PTC) of the large ribosomal subunit to trigger nascent chain hydrolysis.</text>
</comment>
<comment type="PTM">
    <text evidence="3">Methylation of glutamine in the GGQ triplet by HEMK1 is conserved from bacteria to mammals.</text>
</comment>
<comment type="similarity">
    <text evidence="5">Belongs to the prokaryotic/mitochondrial release factor family.</text>
</comment>
<feature type="transit peptide" description="Mitochondrion" evidence="4">
    <location>
        <begin position="1"/>
        <end position="25"/>
    </location>
</feature>
<feature type="chain" id="PRO_0000330945" description="Peptide chain release factor 1-like, mitochondrial">
    <location>
        <begin position="26"/>
        <end position="373"/>
    </location>
</feature>
<feature type="region of interest" description="GGQ domain" evidence="1">
    <location>
        <begin position="229"/>
        <end position="293"/>
    </location>
</feature>
<feature type="coiled-coil region" evidence="4">
    <location>
        <begin position="56"/>
        <end position="110"/>
    </location>
</feature>
<feature type="short sequence motif" description="GGQ" evidence="3">
    <location>
        <begin position="243"/>
        <end position="245"/>
    </location>
</feature>
<feature type="modified residue" description="N5-methylglutamine" evidence="3">
    <location>
        <position position="245"/>
    </location>
</feature>
<name>RF1ML_MOUSE</name>
<proteinExistence type="evidence at transcript level"/>
<evidence type="ECO:0000250" key="1">
    <source>
        <dbReference type="UniProtKB" id="Q80VP5"/>
    </source>
</evidence>
<evidence type="ECO:0000250" key="2">
    <source>
        <dbReference type="UniProtKB" id="Q9H3J6"/>
    </source>
</evidence>
<evidence type="ECO:0000250" key="3">
    <source>
        <dbReference type="UniProtKB" id="Q9UGC7"/>
    </source>
</evidence>
<evidence type="ECO:0000255" key="4"/>
<evidence type="ECO:0000305" key="5"/>
<dbReference type="EMBL" id="AK036424">
    <property type="protein sequence ID" value="BAE20502.1"/>
    <property type="molecule type" value="mRNA"/>
</dbReference>
<dbReference type="EMBL" id="AK078897">
    <property type="protein sequence ID" value="BAC37446.1"/>
    <property type="molecule type" value="mRNA"/>
</dbReference>
<dbReference type="CCDS" id="CCDS56684.1"/>
<dbReference type="RefSeq" id="NP_780583.1">
    <property type="nucleotide sequence ID" value="NM_175374.3"/>
</dbReference>
<dbReference type="SMR" id="Q8BJU9"/>
<dbReference type="FunCoup" id="Q8BJU9">
    <property type="interactions" value="3145"/>
</dbReference>
<dbReference type="STRING" id="10090.ENSMUSP00000019908"/>
<dbReference type="PhosphoSitePlus" id="Q8BJU9"/>
<dbReference type="SwissPalm" id="Q8BJU9"/>
<dbReference type="PaxDb" id="10090-ENSMUSP00000019908"/>
<dbReference type="PeptideAtlas" id="Q8BJU9"/>
<dbReference type="ProteomicsDB" id="253216"/>
<dbReference type="Pumba" id="Q8BJU9"/>
<dbReference type="Antibodypedia" id="33386">
    <property type="antibodies" value="241 antibodies from 14 providers"/>
</dbReference>
<dbReference type="DNASU" id="108853"/>
<dbReference type="Ensembl" id="ENSMUST00000019908.9">
    <property type="protein sequence ID" value="ENSMUSP00000019908.9"/>
    <property type="gene ID" value="ENSMUSG00000019774.9"/>
</dbReference>
<dbReference type="GeneID" id="108853"/>
<dbReference type="KEGG" id="mmu:108853"/>
<dbReference type="UCSC" id="uc007egi.1">
    <property type="organism name" value="mouse"/>
</dbReference>
<dbReference type="AGR" id="MGI:1918830"/>
<dbReference type="CTD" id="54516"/>
<dbReference type="MGI" id="MGI:1918830">
    <property type="gene designation" value="Mtrf1l"/>
</dbReference>
<dbReference type="VEuPathDB" id="HostDB:ENSMUSG00000019774"/>
<dbReference type="eggNOG" id="KOG2726">
    <property type="taxonomic scope" value="Eukaryota"/>
</dbReference>
<dbReference type="GeneTree" id="ENSGT00940000155683"/>
<dbReference type="HOGENOM" id="CLU_036856_0_3_1"/>
<dbReference type="InParanoid" id="Q8BJU9"/>
<dbReference type="OMA" id="DHRVGFK"/>
<dbReference type="OrthoDB" id="2019491at2759"/>
<dbReference type="PhylomeDB" id="Q8BJU9"/>
<dbReference type="TreeFam" id="TF313720"/>
<dbReference type="Reactome" id="R-MMU-5419276">
    <property type="pathway name" value="Mitochondrial translation termination"/>
</dbReference>
<dbReference type="BioGRID-ORCS" id="108853">
    <property type="hits" value="22 hits in 78 CRISPR screens"/>
</dbReference>
<dbReference type="ChiTaRS" id="Mtrf1l">
    <property type="organism name" value="mouse"/>
</dbReference>
<dbReference type="PRO" id="PR:Q8BJU9"/>
<dbReference type="Proteomes" id="UP000000589">
    <property type="component" value="Chromosome 10"/>
</dbReference>
<dbReference type="RNAct" id="Q8BJU9">
    <property type="molecule type" value="protein"/>
</dbReference>
<dbReference type="Bgee" id="ENSMUSG00000019774">
    <property type="expression patterns" value="Expressed in embryonic post-anal tail and 225 other cell types or tissues"/>
</dbReference>
<dbReference type="GO" id="GO:0005739">
    <property type="term" value="C:mitochondrion"/>
    <property type="evidence" value="ECO:0007005"/>
    <property type="project" value="MGI"/>
</dbReference>
<dbReference type="GO" id="GO:0003747">
    <property type="term" value="F:translation release factor activity"/>
    <property type="evidence" value="ECO:0000250"/>
    <property type="project" value="UniProtKB"/>
</dbReference>
<dbReference type="GO" id="GO:0016149">
    <property type="term" value="F:translation release factor activity, codon specific"/>
    <property type="evidence" value="ECO:0007669"/>
    <property type="project" value="Ensembl"/>
</dbReference>
<dbReference type="GO" id="GO:0070126">
    <property type="term" value="P:mitochondrial translational termination"/>
    <property type="evidence" value="ECO:0000250"/>
    <property type="project" value="UniProtKB"/>
</dbReference>
<dbReference type="FunFam" id="3.30.160.20:FF:000004">
    <property type="entry name" value="Peptide chain release factor 1"/>
    <property type="match status" value="1"/>
</dbReference>
<dbReference type="FunFam" id="3.30.70.1660:FF:000004">
    <property type="entry name" value="Peptide chain release factor 1"/>
    <property type="match status" value="1"/>
</dbReference>
<dbReference type="FunFam" id="3.30.70.1660:FF:000011">
    <property type="entry name" value="Peptide chain release factor 1-like, mitochondrial"/>
    <property type="match status" value="1"/>
</dbReference>
<dbReference type="Gene3D" id="3.30.160.20">
    <property type="match status" value="1"/>
</dbReference>
<dbReference type="Gene3D" id="3.30.70.1660">
    <property type="match status" value="1"/>
</dbReference>
<dbReference type="Gene3D" id="6.10.140.1950">
    <property type="match status" value="1"/>
</dbReference>
<dbReference type="InterPro" id="IPR005139">
    <property type="entry name" value="PCRF"/>
</dbReference>
<dbReference type="InterPro" id="IPR000352">
    <property type="entry name" value="Pep_chain_release_fac_I"/>
</dbReference>
<dbReference type="InterPro" id="IPR045853">
    <property type="entry name" value="Pep_chain_release_fac_I_sf"/>
</dbReference>
<dbReference type="InterPro" id="IPR050057">
    <property type="entry name" value="Prokaryotic/Mito_RF"/>
</dbReference>
<dbReference type="NCBIfam" id="NF001859">
    <property type="entry name" value="PRK00591.1"/>
    <property type="match status" value="1"/>
</dbReference>
<dbReference type="PANTHER" id="PTHR43804">
    <property type="entry name" value="LD18447P"/>
    <property type="match status" value="1"/>
</dbReference>
<dbReference type="PANTHER" id="PTHR43804:SF3">
    <property type="entry name" value="PEPTIDE CHAIN RELEASE FACTOR 1-LIKE, MITOCHONDRIAL"/>
    <property type="match status" value="1"/>
</dbReference>
<dbReference type="Pfam" id="PF03462">
    <property type="entry name" value="PCRF"/>
    <property type="match status" value="1"/>
</dbReference>
<dbReference type="Pfam" id="PF00472">
    <property type="entry name" value="RF-1"/>
    <property type="match status" value="1"/>
</dbReference>
<dbReference type="SMART" id="SM00937">
    <property type="entry name" value="PCRF"/>
    <property type="match status" value="1"/>
</dbReference>
<dbReference type="SUPFAM" id="SSF75620">
    <property type="entry name" value="Release factor"/>
    <property type="match status" value="1"/>
</dbReference>
<dbReference type="PROSITE" id="PS00745">
    <property type="entry name" value="RF_PROK_I"/>
    <property type="match status" value="1"/>
</dbReference>
<accession>Q8BJU9</accession>
<protein>
    <recommendedName>
        <fullName>Peptide chain release factor 1-like, mitochondrial</fullName>
    </recommendedName>
    <alternativeName>
        <fullName>Mitochondrial translational release factor 1-like</fullName>
    </alternativeName>
</protein>
<organism>
    <name type="scientific">Mus musculus</name>
    <name type="common">Mouse</name>
    <dbReference type="NCBI Taxonomy" id="10090"/>
    <lineage>
        <taxon>Eukaryota</taxon>
        <taxon>Metazoa</taxon>
        <taxon>Chordata</taxon>
        <taxon>Craniata</taxon>
        <taxon>Vertebrata</taxon>
        <taxon>Euteleostomi</taxon>
        <taxon>Mammalia</taxon>
        <taxon>Eutheria</taxon>
        <taxon>Euarchontoglires</taxon>
        <taxon>Glires</taxon>
        <taxon>Rodentia</taxon>
        <taxon>Myomorpha</taxon>
        <taxon>Muroidea</taxon>
        <taxon>Muridae</taxon>
        <taxon>Murinae</taxon>
        <taxon>Mus</taxon>
        <taxon>Mus</taxon>
    </lineage>
</organism>